<dbReference type="EC" id="2.3.2.22"/>
<dbReference type="EMBL" id="AP006719">
    <property type="protein sequence ID" value="BAE05998.1"/>
    <property type="molecule type" value="Genomic_DNA"/>
</dbReference>
<dbReference type="RefSeq" id="WP_011276926.1">
    <property type="nucleotide sequence ID" value="NC_007171.1"/>
</dbReference>
<dbReference type="PDB" id="6EZ3">
    <property type="method" value="X-ray"/>
    <property type="resolution" value="3.00 A"/>
    <property type="chains" value="A/B/C/D/E/F=1-234"/>
</dbReference>
<dbReference type="PDBsum" id="6EZ3"/>
<dbReference type="SMR" id="Q4L2X9"/>
<dbReference type="KEGG" id="sha:pSHaeC06"/>
<dbReference type="HOGENOM" id="CLU_084186_1_0_9"/>
<dbReference type="OrthoDB" id="2895472at2"/>
<dbReference type="BRENDA" id="2.3.2.22">
    <property type="organism ID" value="5877"/>
</dbReference>
<dbReference type="Proteomes" id="UP000000543">
    <property type="component" value="Plasmid pSHaeC"/>
</dbReference>
<dbReference type="GO" id="GO:0016755">
    <property type="term" value="F:aminoacyltransferase activity"/>
    <property type="evidence" value="ECO:0000314"/>
    <property type="project" value="UniProtKB"/>
</dbReference>
<dbReference type="FunFam" id="3.40.50.11710:FF:000001">
    <property type="entry name" value="Cyclo(L-leucyl-L-leucyl) synthase"/>
    <property type="match status" value="1"/>
</dbReference>
<dbReference type="Gene3D" id="3.40.50.11710">
    <property type="entry name" value="Cyclodipeptide synthase"/>
    <property type="match status" value="1"/>
</dbReference>
<dbReference type="InterPro" id="IPR030903">
    <property type="entry name" value="CDPS"/>
</dbReference>
<dbReference type="InterPro" id="IPR038622">
    <property type="entry name" value="CDPS_sf"/>
</dbReference>
<dbReference type="NCBIfam" id="TIGR04539">
    <property type="entry name" value="tRNA_cyclodipep"/>
    <property type="match status" value="1"/>
</dbReference>
<dbReference type="Pfam" id="PF16715">
    <property type="entry name" value="CDPS"/>
    <property type="match status" value="1"/>
</dbReference>
<geneLocation type="plasmid">
    <name>pSHaeC</name>
</geneLocation>
<gene>
    <name type="ordered locus">pSHaeC06</name>
</gene>
<evidence type="ECO:0000250" key="1"/>
<evidence type="ECO:0000269" key="2">
    <source>
    </source>
</evidence>
<evidence type="ECO:0000305" key="3"/>
<evidence type="ECO:0007829" key="4">
    <source>
        <dbReference type="PDB" id="6EZ3"/>
    </source>
</evidence>
<name>CDLS_STAHJ</name>
<organism>
    <name type="scientific">Staphylococcus haemolyticus (strain JCSC1435)</name>
    <dbReference type="NCBI Taxonomy" id="279808"/>
    <lineage>
        <taxon>Bacteria</taxon>
        <taxon>Bacillati</taxon>
        <taxon>Bacillota</taxon>
        <taxon>Bacilli</taxon>
        <taxon>Bacillales</taxon>
        <taxon>Staphylococcaceae</taxon>
        <taxon>Staphylococcus</taxon>
    </lineage>
</organism>
<proteinExistence type="evidence at protein level"/>
<reference key="1">
    <citation type="journal article" date="2005" name="J. Bacteriol.">
        <title>Whole-genome sequencing of Staphylococcus haemolyticus uncovers the extreme plasticity of its genome and the evolution of human-colonizing staphylococcal species.</title>
        <authorList>
            <person name="Takeuchi F."/>
            <person name="Watanabe S."/>
            <person name="Baba T."/>
            <person name="Yuzawa H."/>
            <person name="Ito T."/>
            <person name="Morimoto Y."/>
            <person name="Kuroda M."/>
            <person name="Cui L."/>
            <person name="Takahashi M."/>
            <person name="Ankai A."/>
            <person name="Baba S."/>
            <person name="Fukui S."/>
            <person name="Lee J.C."/>
            <person name="Hiramatsu K."/>
        </authorList>
    </citation>
    <scope>NUCLEOTIDE SEQUENCE [LARGE SCALE GENOMIC DNA]</scope>
    <source>
        <strain>JCSC1435</strain>
    </source>
</reference>
<reference key="2">
    <citation type="journal article" date="2009" name="Nat. Chem. Biol.">
        <title>Cyclodipeptide synthases arec a family of tRNA-dependent peptide bond-forming enzymes.</title>
        <authorList>
            <person name="Gondry M."/>
            <person name="Sauguet L."/>
            <person name="Belin P."/>
            <person name="Thai R."/>
            <person name="Amouroux R."/>
            <person name="Tellier C."/>
            <person name="Tuphile K."/>
            <person name="Jacquet M."/>
            <person name="Braud S."/>
            <person name="Courcon M."/>
            <person name="Masson C."/>
            <person name="Dubois S."/>
            <person name="Lautru S."/>
            <person name="Lecoq A."/>
            <person name="Hashimoto S."/>
            <person name="Genet R."/>
            <person name="Pernodet J.L."/>
        </authorList>
    </citation>
    <scope>FUNCTION</scope>
    <scope>CATALYTIC ACTIVITY</scope>
    <scope>SUBSTRATE SPECIFICITY</scope>
</reference>
<feature type="chain" id="PRO_0000423352" description="Cyclo(L-leucyl-L-leucyl) synthase">
    <location>
        <begin position="1"/>
        <end position="234"/>
    </location>
</feature>
<feature type="active site" description="Nucleophile" evidence="1">
    <location>
        <position position="28"/>
    </location>
</feature>
<feature type="binding site" evidence="1">
    <location>
        <begin position="171"/>
        <end position="175"/>
    </location>
    <ligand>
        <name>substrate</name>
    </ligand>
</feature>
<feature type="binding site" evidence="1">
    <location>
        <position position="195"/>
    </location>
    <ligand>
        <name>substrate</name>
    </ligand>
</feature>
<feature type="binding site" evidence="1">
    <location>
        <begin position="200"/>
        <end position="201"/>
    </location>
    <ligand>
        <name>substrate</name>
    </ligand>
</feature>
<feature type="site" description="Could be involved in aa-tRNA binding" evidence="1">
    <location>
        <position position="79"/>
    </location>
</feature>
<feature type="site" description="Could be involved in aa-tRNA binding" evidence="1">
    <location>
        <position position="89"/>
    </location>
</feature>
<feature type="site" description="Could be involved in aa-tRNA binding" evidence="1">
    <location>
        <position position="171"/>
    </location>
</feature>
<feature type="site" description="Could have a critical role in the catalytic mechanism" evidence="1">
    <location>
        <position position="175"/>
    </location>
</feature>
<feature type="strand" evidence="4">
    <location>
        <begin position="4"/>
        <end position="10"/>
    </location>
</feature>
<feature type="helix" evidence="4">
    <location>
        <begin position="11"/>
        <end position="19"/>
    </location>
</feature>
<feature type="strand" evidence="4">
    <location>
        <begin position="22"/>
        <end position="26"/>
    </location>
</feature>
<feature type="strand" evidence="4">
    <location>
        <begin position="32"/>
        <end position="34"/>
    </location>
</feature>
<feature type="helix" evidence="4">
    <location>
        <begin position="36"/>
        <end position="49"/>
    </location>
</feature>
<feature type="strand" evidence="4">
    <location>
        <begin position="51"/>
        <end position="57"/>
    </location>
</feature>
<feature type="helix" evidence="4">
    <location>
        <begin position="60"/>
        <end position="62"/>
    </location>
</feature>
<feature type="helix" evidence="4">
    <location>
        <begin position="63"/>
        <end position="68"/>
    </location>
</feature>
<feature type="helix" evidence="4">
    <location>
        <begin position="73"/>
        <end position="97"/>
    </location>
</feature>
<feature type="turn" evidence="4">
    <location>
        <begin position="103"/>
        <end position="105"/>
    </location>
</feature>
<feature type="strand" evidence="4">
    <location>
        <begin position="106"/>
        <end position="108"/>
    </location>
</feature>
<feature type="turn" evidence="4">
    <location>
        <begin position="109"/>
        <end position="114"/>
    </location>
</feature>
<feature type="helix" evidence="4">
    <location>
        <begin position="116"/>
        <end position="131"/>
    </location>
</feature>
<feature type="helix" evidence="4">
    <location>
        <begin position="133"/>
        <end position="149"/>
    </location>
</feature>
<feature type="helix" evidence="4">
    <location>
        <begin position="162"/>
        <end position="175"/>
    </location>
</feature>
<feature type="helix" evidence="4">
    <location>
        <begin position="177"/>
        <end position="181"/>
    </location>
</feature>
<feature type="helix" evidence="4">
    <location>
        <begin position="183"/>
        <end position="186"/>
    </location>
</feature>
<feature type="strand" evidence="4">
    <location>
        <begin position="189"/>
        <end position="197"/>
    </location>
</feature>
<feature type="helix" evidence="4">
    <location>
        <begin position="200"/>
        <end position="206"/>
    </location>
</feature>
<feature type="strand" evidence="4">
    <location>
        <begin position="218"/>
        <end position="225"/>
    </location>
</feature>
<comment type="function">
    <text evidence="2">It uses activated amino acids in the form of aminoacyl-tRNAs (aa-tRNAs) as substrates to catalyze the ATP-independent formation of cyclodipeptides which are intermediates in diketopiperazine (DKP) biosynthetic pathways. Catalyzes the formation of cyclo(L-Leu-L-Leu) (cLL) from L-leucyl-tRNA(Leu). Can incorporate various nonpolar residues, such as L-phenylalanine, L-leucine and L-methionine, into cyclodipeptides.</text>
</comment>
<comment type="catalytic activity">
    <reaction evidence="2">
        <text>2 L-leucyl-tRNA(Leu) = cyclo(L-leucyl-L-leucyl) + 2 tRNA(Leu) + 2 H(+)</text>
        <dbReference type="Rhea" id="RHEA:46452"/>
        <dbReference type="Rhea" id="RHEA-COMP:9613"/>
        <dbReference type="Rhea" id="RHEA-COMP:9622"/>
        <dbReference type="ChEBI" id="CHEBI:15378"/>
        <dbReference type="ChEBI" id="CHEBI:67269"/>
        <dbReference type="ChEBI" id="CHEBI:78442"/>
        <dbReference type="ChEBI" id="CHEBI:78494"/>
        <dbReference type="EC" id="2.3.2.22"/>
    </reaction>
</comment>
<comment type="similarity">
    <text evidence="3">Belongs to the CDPS family.</text>
</comment>
<sequence length="234" mass="27355">MQNFKVDFLTKNCKQIYQRKKHVILGISPFTSKYNESYIRKIIQWANSNFDDFSILLAGEESKNLLECLGYSSSKANQKVRKEIKRQIRFCEDEIIKCNKTITNRIHRFSDFKNNIYYIDIYKTIVDQFNTDSNFKNSCLKMSLQALQSKGKNVNTSIEITDETLEYAAQYVLAELPFFLNANPIINTQETLMAYHAPWELGTNIINDQFNLKMNEKQGYIILTEKGDNYVKSV</sequence>
<accession>Q4L2X9</accession>
<keyword id="KW-0002">3D-structure</keyword>
<keyword id="KW-0614">Plasmid</keyword>
<keyword id="KW-0808">Transferase</keyword>
<protein>
    <recommendedName>
        <fullName>Cyclo(L-leucyl-L-leucyl) synthase</fullName>
        <ecNumber>2.3.2.22</ecNumber>
    </recommendedName>
    <alternativeName>
        <fullName>Cyclodileucine synthase</fullName>
    </alternativeName>
    <alternativeName>
        <fullName>Cyclodipeptide synthase</fullName>
        <shortName>CDPS</shortName>
    </alternativeName>
</protein>